<feature type="chain" id="PRO_0000242502" description="Nucleoside diphosphate kinase">
    <location>
        <begin position="1"/>
        <end position="139"/>
    </location>
</feature>
<feature type="active site" description="Pros-phosphohistidine intermediate" evidence="1">
    <location>
        <position position="117"/>
    </location>
</feature>
<feature type="binding site" evidence="1">
    <location>
        <position position="11"/>
    </location>
    <ligand>
        <name>ATP</name>
        <dbReference type="ChEBI" id="CHEBI:30616"/>
    </ligand>
</feature>
<feature type="binding site" evidence="1">
    <location>
        <position position="59"/>
    </location>
    <ligand>
        <name>ATP</name>
        <dbReference type="ChEBI" id="CHEBI:30616"/>
    </ligand>
</feature>
<feature type="binding site" evidence="1">
    <location>
        <position position="87"/>
    </location>
    <ligand>
        <name>ATP</name>
        <dbReference type="ChEBI" id="CHEBI:30616"/>
    </ligand>
</feature>
<feature type="binding site" evidence="1">
    <location>
        <position position="93"/>
    </location>
    <ligand>
        <name>ATP</name>
        <dbReference type="ChEBI" id="CHEBI:30616"/>
    </ligand>
</feature>
<feature type="binding site" evidence="1">
    <location>
        <position position="104"/>
    </location>
    <ligand>
        <name>ATP</name>
        <dbReference type="ChEBI" id="CHEBI:30616"/>
    </ligand>
</feature>
<feature type="binding site" evidence="1">
    <location>
        <position position="114"/>
    </location>
    <ligand>
        <name>ATP</name>
        <dbReference type="ChEBI" id="CHEBI:30616"/>
    </ligand>
</feature>
<dbReference type="EC" id="2.7.4.6" evidence="1"/>
<dbReference type="EMBL" id="CP000232">
    <property type="protein sequence ID" value="ABC18445.1"/>
    <property type="molecule type" value="Genomic_DNA"/>
</dbReference>
<dbReference type="RefSeq" id="YP_428988.1">
    <property type="nucleotide sequence ID" value="NC_007644.1"/>
</dbReference>
<dbReference type="SMR" id="Q2RM94"/>
<dbReference type="STRING" id="264732.Moth_0106"/>
<dbReference type="EnsemblBacteria" id="ABC18445">
    <property type="protein sequence ID" value="ABC18445"/>
    <property type="gene ID" value="Moth_0106"/>
</dbReference>
<dbReference type="KEGG" id="mta:Moth_0106"/>
<dbReference type="PATRIC" id="fig|264732.11.peg.111"/>
<dbReference type="eggNOG" id="COG0105">
    <property type="taxonomic scope" value="Bacteria"/>
</dbReference>
<dbReference type="HOGENOM" id="CLU_060216_6_3_9"/>
<dbReference type="OrthoDB" id="9801161at2"/>
<dbReference type="GO" id="GO:0005737">
    <property type="term" value="C:cytoplasm"/>
    <property type="evidence" value="ECO:0007669"/>
    <property type="project" value="UniProtKB-SubCell"/>
</dbReference>
<dbReference type="GO" id="GO:0005524">
    <property type="term" value="F:ATP binding"/>
    <property type="evidence" value="ECO:0007669"/>
    <property type="project" value="UniProtKB-UniRule"/>
</dbReference>
<dbReference type="GO" id="GO:0046872">
    <property type="term" value="F:metal ion binding"/>
    <property type="evidence" value="ECO:0007669"/>
    <property type="project" value="UniProtKB-KW"/>
</dbReference>
<dbReference type="GO" id="GO:0004550">
    <property type="term" value="F:nucleoside diphosphate kinase activity"/>
    <property type="evidence" value="ECO:0007669"/>
    <property type="project" value="UniProtKB-UniRule"/>
</dbReference>
<dbReference type="GO" id="GO:0006241">
    <property type="term" value="P:CTP biosynthetic process"/>
    <property type="evidence" value="ECO:0007669"/>
    <property type="project" value="UniProtKB-UniRule"/>
</dbReference>
<dbReference type="GO" id="GO:0006183">
    <property type="term" value="P:GTP biosynthetic process"/>
    <property type="evidence" value="ECO:0007669"/>
    <property type="project" value="UniProtKB-UniRule"/>
</dbReference>
<dbReference type="GO" id="GO:0006228">
    <property type="term" value="P:UTP biosynthetic process"/>
    <property type="evidence" value="ECO:0007669"/>
    <property type="project" value="UniProtKB-UniRule"/>
</dbReference>
<dbReference type="CDD" id="cd04413">
    <property type="entry name" value="NDPk_I"/>
    <property type="match status" value="1"/>
</dbReference>
<dbReference type="FunFam" id="3.30.70.141:FF:000003">
    <property type="entry name" value="Nucleoside diphosphate kinase"/>
    <property type="match status" value="1"/>
</dbReference>
<dbReference type="Gene3D" id="3.30.70.141">
    <property type="entry name" value="Nucleoside diphosphate kinase-like domain"/>
    <property type="match status" value="1"/>
</dbReference>
<dbReference type="HAMAP" id="MF_00451">
    <property type="entry name" value="NDP_kinase"/>
    <property type="match status" value="1"/>
</dbReference>
<dbReference type="InterPro" id="IPR034907">
    <property type="entry name" value="NDK-like_dom"/>
</dbReference>
<dbReference type="InterPro" id="IPR036850">
    <property type="entry name" value="NDK-like_dom_sf"/>
</dbReference>
<dbReference type="InterPro" id="IPR001564">
    <property type="entry name" value="Nucleoside_diP_kinase"/>
</dbReference>
<dbReference type="NCBIfam" id="NF001908">
    <property type="entry name" value="PRK00668.1"/>
    <property type="match status" value="1"/>
</dbReference>
<dbReference type="PANTHER" id="PTHR11349">
    <property type="entry name" value="NUCLEOSIDE DIPHOSPHATE KINASE"/>
    <property type="match status" value="1"/>
</dbReference>
<dbReference type="Pfam" id="PF00334">
    <property type="entry name" value="NDK"/>
    <property type="match status" value="1"/>
</dbReference>
<dbReference type="PRINTS" id="PR01243">
    <property type="entry name" value="NUCDPKINASE"/>
</dbReference>
<dbReference type="SMART" id="SM00562">
    <property type="entry name" value="NDK"/>
    <property type="match status" value="1"/>
</dbReference>
<dbReference type="SUPFAM" id="SSF54919">
    <property type="entry name" value="Nucleoside diphosphate kinase, NDK"/>
    <property type="match status" value="1"/>
</dbReference>
<dbReference type="PROSITE" id="PS51374">
    <property type="entry name" value="NDPK_LIKE"/>
    <property type="match status" value="1"/>
</dbReference>
<organism>
    <name type="scientific">Moorella thermoacetica (strain ATCC 39073 / JCM 9320)</name>
    <dbReference type="NCBI Taxonomy" id="264732"/>
    <lineage>
        <taxon>Bacteria</taxon>
        <taxon>Bacillati</taxon>
        <taxon>Bacillota</taxon>
        <taxon>Clostridia</taxon>
        <taxon>Moorellales</taxon>
        <taxon>Moorellaceae</taxon>
        <taxon>Moorella</taxon>
    </lineage>
</organism>
<gene>
    <name evidence="1" type="primary">ndk</name>
    <name type="ordered locus">Moth_0106</name>
</gene>
<accession>Q2RM94</accession>
<evidence type="ECO:0000255" key="1">
    <source>
        <dbReference type="HAMAP-Rule" id="MF_00451"/>
    </source>
</evidence>
<name>NDK_MOOTA</name>
<protein>
    <recommendedName>
        <fullName evidence="1">Nucleoside diphosphate kinase</fullName>
        <shortName evidence="1">NDK</shortName>
        <shortName evidence="1">NDP kinase</shortName>
        <ecNumber evidence="1">2.7.4.6</ecNumber>
    </recommendedName>
    <alternativeName>
        <fullName evidence="1">Nucleoside-2-P kinase</fullName>
    </alternativeName>
</protein>
<proteinExistence type="inferred from homology"/>
<reference key="1">
    <citation type="journal article" date="2008" name="Environ. Microbiol.">
        <title>The complete genome sequence of Moorella thermoacetica (f. Clostridium thermoaceticum).</title>
        <authorList>
            <person name="Pierce E."/>
            <person name="Xie G."/>
            <person name="Barabote R.D."/>
            <person name="Saunders E."/>
            <person name="Han C.S."/>
            <person name="Detter J.C."/>
            <person name="Richardson P."/>
            <person name="Brettin T.S."/>
            <person name="Das A."/>
            <person name="Ljungdahl L.G."/>
            <person name="Ragsdale S.W."/>
        </authorList>
    </citation>
    <scope>NUCLEOTIDE SEQUENCE [LARGE SCALE GENOMIC DNA]</scope>
    <source>
        <strain>ATCC 39073 / JCM 9320</strain>
    </source>
</reference>
<comment type="function">
    <text evidence="1">Major role in the synthesis of nucleoside triphosphates other than ATP. The ATP gamma phosphate is transferred to the NDP beta phosphate via a ping-pong mechanism, using a phosphorylated active-site intermediate.</text>
</comment>
<comment type="catalytic activity">
    <reaction evidence="1">
        <text>a 2'-deoxyribonucleoside 5'-diphosphate + ATP = a 2'-deoxyribonucleoside 5'-triphosphate + ADP</text>
        <dbReference type="Rhea" id="RHEA:44640"/>
        <dbReference type="ChEBI" id="CHEBI:30616"/>
        <dbReference type="ChEBI" id="CHEBI:61560"/>
        <dbReference type="ChEBI" id="CHEBI:73316"/>
        <dbReference type="ChEBI" id="CHEBI:456216"/>
        <dbReference type="EC" id="2.7.4.6"/>
    </reaction>
</comment>
<comment type="catalytic activity">
    <reaction evidence="1">
        <text>a ribonucleoside 5'-diphosphate + ATP = a ribonucleoside 5'-triphosphate + ADP</text>
        <dbReference type="Rhea" id="RHEA:18113"/>
        <dbReference type="ChEBI" id="CHEBI:30616"/>
        <dbReference type="ChEBI" id="CHEBI:57930"/>
        <dbReference type="ChEBI" id="CHEBI:61557"/>
        <dbReference type="ChEBI" id="CHEBI:456216"/>
        <dbReference type="EC" id="2.7.4.6"/>
    </reaction>
</comment>
<comment type="cofactor">
    <cofactor evidence="1">
        <name>Mg(2+)</name>
        <dbReference type="ChEBI" id="CHEBI:18420"/>
    </cofactor>
</comment>
<comment type="subunit">
    <text evidence="1">Homotetramer.</text>
</comment>
<comment type="subcellular location">
    <subcellularLocation>
        <location evidence="1">Cytoplasm</location>
    </subcellularLocation>
</comment>
<comment type="similarity">
    <text evidence="1">Belongs to the NDK family.</text>
</comment>
<sequence length="139" mass="15039">MAVERTFSMIKPEGVRRGLVGAILARLEQKGYRIVALKMLRLTPEMAAAHYAEHRDKPFYQDLINHITSGPVVAMVLEGPGVIAGLRRLMGATNPQEAAPGTIRGDFALETSDNVIHGADSPASAEREIALYFTPAELG</sequence>
<keyword id="KW-0067">ATP-binding</keyword>
<keyword id="KW-0963">Cytoplasm</keyword>
<keyword id="KW-0418">Kinase</keyword>
<keyword id="KW-0460">Magnesium</keyword>
<keyword id="KW-0479">Metal-binding</keyword>
<keyword id="KW-0546">Nucleotide metabolism</keyword>
<keyword id="KW-0547">Nucleotide-binding</keyword>
<keyword id="KW-0597">Phosphoprotein</keyword>
<keyword id="KW-0808">Transferase</keyword>